<protein>
    <recommendedName>
        <fullName evidence="1">Glycine dehydrogenase (decarboxylating)</fullName>
        <ecNumber evidence="1">1.4.4.2</ecNumber>
    </recommendedName>
    <alternativeName>
        <fullName evidence="1">Glycine cleavage system P-protein</fullName>
    </alternativeName>
    <alternativeName>
        <fullName evidence="1">Glycine decarboxylase</fullName>
    </alternativeName>
    <alternativeName>
        <fullName evidence="1">Glycine dehydrogenase (aminomethyl-transferring)</fullName>
    </alternativeName>
</protein>
<keyword id="KW-0560">Oxidoreductase</keyword>
<keyword id="KW-0663">Pyridoxal phosphate</keyword>
<accession>A5EYY8</accession>
<accession>C3M807</accession>
<organism>
    <name type="scientific">Vibrio cholerae serotype O1 (strain ATCC 39541 / Classical Ogawa 395 / O395)</name>
    <dbReference type="NCBI Taxonomy" id="345073"/>
    <lineage>
        <taxon>Bacteria</taxon>
        <taxon>Pseudomonadati</taxon>
        <taxon>Pseudomonadota</taxon>
        <taxon>Gammaproteobacteria</taxon>
        <taxon>Vibrionales</taxon>
        <taxon>Vibrionaceae</taxon>
        <taxon>Vibrio</taxon>
    </lineage>
</organism>
<gene>
    <name evidence="1" type="primary">gcvP</name>
    <name type="ordered locus">VC0395_0955</name>
    <name type="ordered locus">VC395_A0313</name>
</gene>
<reference key="1">
    <citation type="submission" date="2007-03" db="EMBL/GenBank/DDBJ databases">
        <authorList>
            <person name="Heidelberg J."/>
        </authorList>
    </citation>
    <scope>NUCLEOTIDE SEQUENCE [LARGE SCALE GENOMIC DNA]</scope>
    <source>
        <strain>ATCC 39541 / Classical Ogawa 395 / O395</strain>
    </source>
</reference>
<reference key="2">
    <citation type="journal article" date="2008" name="PLoS ONE">
        <title>A recalibrated molecular clock and independent origins for the cholera pandemic clones.</title>
        <authorList>
            <person name="Feng L."/>
            <person name="Reeves P.R."/>
            <person name="Lan R."/>
            <person name="Ren Y."/>
            <person name="Gao C."/>
            <person name="Zhou Z."/>
            <person name="Ren Y."/>
            <person name="Cheng J."/>
            <person name="Wang W."/>
            <person name="Wang J."/>
            <person name="Qian W."/>
            <person name="Li D."/>
            <person name="Wang L."/>
        </authorList>
    </citation>
    <scope>NUCLEOTIDE SEQUENCE [LARGE SCALE GENOMIC DNA]</scope>
    <source>
        <strain>ATCC 39541 / Classical Ogawa 395 / O395</strain>
    </source>
</reference>
<feature type="chain" id="PRO_1000072766" description="Glycine dehydrogenase (decarboxylating)">
    <location>
        <begin position="1"/>
        <end position="954"/>
    </location>
</feature>
<feature type="modified residue" description="N6-(pyridoxal phosphate)lysine" evidence="1">
    <location>
        <position position="704"/>
    </location>
</feature>
<evidence type="ECO:0000255" key="1">
    <source>
        <dbReference type="HAMAP-Rule" id="MF_00711"/>
    </source>
</evidence>
<sequence length="954" mass="103954">MTELLHSLSTQNEFVARHNGPDKQEQATMLKTVNAESLDALIAQTVPAQIRLEAPMQLAPAQSEADMLATMKSFAKLNQLKRTFIGQGYYNTFTPNVILRNVMENPGWYTAYTPYQPEISQGRLESLLNYQQMVMDLTAMEIANASLLDEATAAAEAMALCQRAGKSKSNLFFVADDVHPQTIEVVKTRAAFLGFEVKVDSIDNITQQEAFGALLQYPGTTGEVRDLTDIIAKAQANKTLVTVATDLLASVLLKPAGEMGADVVIGSAQRFGVPMGYGGPHAAFMATRDAHKRTMPGRVIGVSIDAKGNQALRMAMQTREQHIRREKATSNICTAQALLANMAAFYAVYHGPQGLRTIARRAHHLTAILAAGLTKAGYELAHQHFFDTLAINTGAKTDALYQAAQQANINLRKLPNQLGVSFDETTTVADVEALFAIFGIKEEVHALSDRIATNELAAIPESCRRQSAFLTHPVFNTHHSETQMLRYMKHLENKDFSLTHGMIPLGSCTMKLNATAEMIPVTWPEFGALHPFVPKAQAAGYAALAEDLKQKLCEITGYDAFSLQPNSGASGEYAGLVAIQRYHQSRGEGHRNVCLIPSSAHGTNPATAAMVSMKVVVVKCDENGNIDMVDLADKIEKHKDHLSSIMITYPSTHGVYEQQVREVCEMVHAAGGQVYLDGANMNAQVGLTSPGFIGSDVSHLNLHKTFCIPHGGGGPGMGPIGVKSHLAPFLPGHIEGGVEGSDFAVSAADLGSASILPISWAYIAMMGADGLAEATKLAILNANYVMERLRPHYPILYRGANGRVAHECIIDIRPLKEETGISEEDIAKRLMDYGFHAPTMSFPVAGTLMVEPTESEDLAELDRFCDALIAIRGEIDKVKNGEWPLESNPLVHAPHTQADLREEKWDRPYSREIACFPSAHTKASKYWPTVNRVDNVYGDRNLVCSCPSIDSYQD</sequence>
<dbReference type="EC" id="1.4.4.2" evidence="1"/>
<dbReference type="EMBL" id="CP000626">
    <property type="protein sequence ID" value="ABQ18474.1"/>
    <property type="molecule type" value="Genomic_DNA"/>
</dbReference>
<dbReference type="EMBL" id="CP001236">
    <property type="protein sequence ID" value="ACP11153.1"/>
    <property type="molecule type" value="Genomic_DNA"/>
</dbReference>
<dbReference type="RefSeq" id="WP_000137693.1">
    <property type="nucleotide sequence ID" value="NZ_JAACZH010000047.1"/>
</dbReference>
<dbReference type="SMR" id="A5EYY8"/>
<dbReference type="KEGG" id="vco:VC0395_0955"/>
<dbReference type="KEGG" id="vcr:VC395_A0313"/>
<dbReference type="PATRIC" id="fig|345073.21.peg.3072"/>
<dbReference type="eggNOG" id="COG0403">
    <property type="taxonomic scope" value="Bacteria"/>
</dbReference>
<dbReference type="eggNOG" id="COG1003">
    <property type="taxonomic scope" value="Bacteria"/>
</dbReference>
<dbReference type="HOGENOM" id="CLU_004620_1_1_6"/>
<dbReference type="OrthoDB" id="9801272at2"/>
<dbReference type="Proteomes" id="UP000000249">
    <property type="component" value="Chromosome 1"/>
</dbReference>
<dbReference type="GO" id="GO:0005829">
    <property type="term" value="C:cytosol"/>
    <property type="evidence" value="ECO:0007669"/>
    <property type="project" value="TreeGrafter"/>
</dbReference>
<dbReference type="GO" id="GO:0005960">
    <property type="term" value="C:glycine cleavage complex"/>
    <property type="evidence" value="ECO:0007669"/>
    <property type="project" value="TreeGrafter"/>
</dbReference>
<dbReference type="GO" id="GO:0016594">
    <property type="term" value="F:glycine binding"/>
    <property type="evidence" value="ECO:0007669"/>
    <property type="project" value="TreeGrafter"/>
</dbReference>
<dbReference type="GO" id="GO:0004375">
    <property type="term" value="F:glycine dehydrogenase (decarboxylating) activity"/>
    <property type="evidence" value="ECO:0007669"/>
    <property type="project" value="UniProtKB-EC"/>
</dbReference>
<dbReference type="GO" id="GO:0030170">
    <property type="term" value="F:pyridoxal phosphate binding"/>
    <property type="evidence" value="ECO:0007669"/>
    <property type="project" value="TreeGrafter"/>
</dbReference>
<dbReference type="GO" id="GO:0019464">
    <property type="term" value="P:glycine decarboxylation via glycine cleavage system"/>
    <property type="evidence" value="ECO:0007669"/>
    <property type="project" value="UniProtKB-UniRule"/>
</dbReference>
<dbReference type="CDD" id="cd00613">
    <property type="entry name" value="GDC-P"/>
    <property type="match status" value="1"/>
</dbReference>
<dbReference type="FunFam" id="3.40.640.10:FF:000005">
    <property type="entry name" value="Glycine dehydrogenase (decarboxylating), mitochondrial"/>
    <property type="match status" value="1"/>
</dbReference>
<dbReference type="FunFam" id="3.90.1150.10:FF:000007">
    <property type="entry name" value="Glycine dehydrogenase (decarboxylating), mitochondrial"/>
    <property type="match status" value="1"/>
</dbReference>
<dbReference type="FunFam" id="3.40.640.10:FF:000007">
    <property type="entry name" value="glycine dehydrogenase (Decarboxylating), mitochondrial"/>
    <property type="match status" value="1"/>
</dbReference>
<dbReference type="Gene3D" id="3.90.1150.10">
    <property type="entry name" value="Aspartate Aminotransferase, domain 1"/>
    <property type="match status" value="2"/>
</dbReference>
<dbReference type="Gene3D" id="3.40.640.10">
    <property type="entry name" value="Type I PLP-dependent aspartate aminotransferase-like (Major domain)"/>
    <property type="match status" value="2"/>
</dbReference>
<dbReference type="HAMAP" id="MF_00711">
    <property type="entry name" value="GcvP"/>
    <property type="match status" value="1"/>
</dbReference>
<dbReference type="InterPro" id="IPR003437">
    <property type="entry name" value="GcvP"/>
</dbReference>
<dbReference type="InterPro" id="IPR049316">
    <property type="entry name" value="GDC-P_C"/>
</dbReference>
<dbReference type="InterPro" id="IPR049315">
    <property type="entry name" value="GDC-P_N"/>
</dbReference>
<dbReference type="InterPro" id="IPR020581">
    <property type="entry name" value="GDC_P"/>
</dbReference>
<dbReference type="InterPro" id="IPR015424">
    <property type="entry name" value="PyrdxlP-dep_Trfase"/>
</dbReference>
<dbReference type="InterPro" id="IPR015421">
    <property type="entry name" value="PyrdxlP-dep_Trfase_major"/>
</dbReference>
<dbReference type="InterPro" id="IPR015422">
    <property type="entry name" value="PyrdxlP-dep_Trfase_small"/>
</dbReference>
<dbReference type="NCBIfam" id="TIGR00461">
    <property type="entry name" value="gcvP"/>
    <property type="match status" value="1"/>
</dbReference>
<dbReference type="PANTHER" id="PTHR11773:SF13">
    <property type="entry name" value="GLYCINE DEHYDROGENASE (DECARBOXYLATING)"/>
    <property type="match status" value="1"/>
</dbReference>
<dbReference type="PANTHER" id="PTHR11773">
    <property type="entry name" value="GLYCINE DEHYDROGENASE, DECARBOXYLATING"/>
    <property type="match status" value="1"/>
</dbReference>
<dbReference type="Pfam" id="PF21478">
    <property type="entry name" value="GcvP2_C"/>
    <property type="match status" value="1"/>
</dbReference>
<dbReference type="Pfam" id="PF02347">
    <property type="entry name" value="GDC-P"/>
    <property type="match status" value="2"/>
</dbReference>
<dbReference type="SUPFAM" id="SSF53383">
    <property type="entry name" value="PLP-dependent transferases"/>
    <property type="match status" value="2"/>
</dbReference>
<proteinExistence type="inferred from homology"/>
<comment type="function">
    <text evidence="1">The glycine cleavage system catalyzes the degradation of glycine. The P protein binds the alpha-amino group of glycine through its pyridoxal phosphate cofactor; CO(2) is released and the remaining methylamine moiety is then transferred to the lipoamide cofactor of the H protein.</text>
</comment>
<comment type="catalytic activity">
    <reaction evidence="1">
        <text>N(6)-[(R)-lipoyl]-L-lysyl-[glycine-cleavage complex H protein] + glycine + H(+) = N(6)-[(R)-S(8)-aminomethyldihydrolipoyl]-L-lysyl-[glycine-cleavage complex H protein] + CO2</text>
        <dbReference type="Rhea" id="RHEA:24304"/>
        <dbReference type="Rhea" id="RHEA-COMP:10494"/>
        <dbReference type="Rhea" id="RHEA-COMP:10495"/>
        <dbReference type="ChEBI" id="CHEBI:15378"/>
        <dbReference type="ChEBI" id="CHEBI:16526"/>
        <dbReference type="ChEBI" id="CHEBI:57305"/>
        <dbReference type="ChEBI" id="CHEBI:83099"/>
        <dbReference type="ChEBI" id="CHEBI:83143"/>
        <dbReference type="EC" id="1.4.4.2"/>
    </reaction>
</comment>
<comment type="cofactor">
    <cofactor evidence="1">
        <name>pyridoxal 5'-phosphate</name>
        <dbReference type="ChEBI" id="CHEBI:597326"/>
    </cofactor>
</comment>
<comment type="subunit">
    <text evidence="1">The glycine cleavage system is composed of four proteins: P, T, L and H.</text>
</comment>
<comment type="similarity">
    <text evidence="1">Belongs to the GcvP family.</text>
</comment>
<name>GCSP_VIBC3</name>